<organism>
    <name type="scientific">Streptococcus gordonii (strain Challis / ATCC 35105 / BCRC 15272 / CH1 / DL1 / V288)</name>
    <dbReference type="NCBI Taxonomy" id="467705"/>
    <lineage>
        <taxon>Bacteria</taxon>
        <taxon>Bacillati</taxon>
        <taxon>Bacillota</taxon>
        <taxon>Bacilli</taxon>
        <taxon>Lactobacillales</taxon>
        <taxon>Streptococcaceae</taxon>
        <taxon>Streptococcus</taxon>
    </lineage>
</organism>
<keyword id="KW-0028">Amino-acid biosynthesis</keyword>
<keyword id="KW-0057">Aromatic amino acid biosynthesis</keyword>
<keyword id="KW-0067">ATP-binding</keyword>
<keyword id="KW-0963">Cytoplasm</keyword>
<keyword id="KW-0418">Kinase</keyword>
<keyword id="KW-0460">Magnesium</keyword>
<keyword id="KW-0479">Metal-binding</keyword>
<keyword id="KW-0547">Nucleotide-binding</keyword>
<keyword id="KW-1185">Reference proteome</keyword>
<keyword id="KW-0808">Transferase</keyword>
<gene>
    <name evidence="1" type="primary">aroK</name>
    <name type="ordered locus">SGO_1367</name>
</gene>
<evidence type="ECO:0000255" key="1">
    <source>
        <dbReference type="HAMAP-Rule" id="MF_00109"/>
    </source>
</evidence>
<name>AROK_STRGC</name>
<sequence>MSKILLGFMGAGKTTVGRLLDPNFHDMDELIVNQIGMSINDFFAQEGEEAFRKIETATLESLLANQAKIISPGGGIVVNPHNRDLLEKNPYNIYLRVDFDTLYKRIENDLAMQRPLYLNNTREEFKKIFEARLPIYEKIATHIIDVAGKTPEEIAEIIRCL</sequence>
<proteinExistence type="inferred from homology"/>
<reference key="1">
    <citation type="journal article" date="2007" name="J. Bacteriol.">
        <title>Genome-wide transcriptional changes in Streptococcus gordonii in response to competence signaling peptide.</title>
        <authorList>
            <person name="Vickerman M.M."/>
            <person name="Iobst S."/>
            <person name="Jesionowski A.M."/>
            <person name="Gill S.R."/>
        </authorList>
    </citation>
    <scope>NUCLEOTIDE SEQUENCE [LARGE SCALE GENOMIC DNA]</scope>
    <source>
        <strain>Challis / ATCC 35105 / BCRC 15272 / CH1 / DL1 / V288</strain>
    </source>
</reference>
<comment type="function">
    <text evidence="1">Catalyzes the specific phosphorylation of the 3-hydroxyl group of shikimic acid using ATP as a cosubstrate.</text>
</comment>
<comment type="catalytic activity">
    <reaction evidence="1">
        <text>shikimate + ATP = 3-phosphoshikimate + ADP + H(+)</text>
        <dbReference type="Rhea" id="RHEA:13121"/>
        <dbReference type="ChEBI" id="CHEBI:15378"/>
        <dbReference type="ChEBI" id="CHEBI:30616"/>
        <dbReference type="ChEBI" id="CHEBI:36208"/>
        <dbReference type="ChEBI" id="CHEBI:145989"/>
        <dbReference type="ChEBI" id="CHEBI:456216"/>
        <dbReference type="EC" id="2.7.1.71"/>
    </reaction>
</comment>
<comment type="cofactor">
    <cofactor evidence="1">
        <name>Mg(2+)</name>
        <dbReference type="ChEBI" id="CHEBI:18420"/>
    </cofactor>
    <text evidence="1">Binds 1 Mg(2+) ion per subunit.</text>
</comment>
<comment type="pathway">
    <text evidence="1">Metabolic intermediate biosynthesis; chorismate biosynthesis; chorismate from D-erythrose 4-phosphate and phosphoenolpyruvate: step 5/7.</text>
</comment>
<comment type="subunit">
    <text evidence="1">Monomer.</text>
</comment>
<comment type="subcellular location">
    <subcellularLocation>
        <location evidence="1">Cytoplasm</location>
    </subcellularLocation>
</comment>
<comment type="similarity">
    <text evidence="1">Belongs to the shikimate kinase family.</text>
</comment>
<accession>A8AXY8</accession>
<protein>
    <recommendedName>
        <fullName evidence="1">Shikimate kinase</fullName>
        <shortName evidence="1">SK</shortName>
        <ecNumber evidence="1">2.7.1.71</ecNumber>
    </recommendedName>
</protein>
<dbReference type="EC" id="2.7.1.71" evidence="1"/>
<dbReference type="EMBL" id="CP000725">
    <property type="protein sequence ID" value="ABV10877.1"/>
    <property type="molecule type" value="Genomic_DNA"/>
</dbReference>
<dbReference type="RefSeq" id="WP_012130456.1">
    <property type="nucleotide sequence ID" value="NC_009785.1"/>
</dbReference>
<dbReference type="SMR" id="A8AXY8"/>
<dbReference type="STRING" id="467705.SGO_1367"/>
<dbReference type="KEGG" id="sgo:SGO_1367"/>
<dbReference type="eggNOG" id="COG0703">
    <property type="taxonomic scope" value="Bacteria"/>
</dbReference>
<dbReference type="HOGENOM" id="CLU_057607_4_3_9"/>
<dbReference type="UniPathway" id="UPA00053">
    <property type="reaction ID" value="UER00088"/>
</dbReference>
<dbReference type="Proteomes" id="UP000001131">
    <property type="component" value="Chromosome"/>
</dbReference>
<dbReference type="GO" id="GO:0005829">
    <property type="term" value="C:cytosol"/>
    <property type="evidence" value="ECO:0007669"/>
    <property type="project" value="TreeGrafter"/>
</dbReference>
<dbReference type="GO" id="GO:0005524">
    <property type="term" value="F:ATP binding"/>
    <property type="evidence" value="ECO:0007669"/>
    <property type="project" value="UniProtKB-UniRule"/>
</dbReference>
<dbReference type="GO" id="GO:0000287">
    <property type="term" value="F:magnesium ion binding"/>
    <property type="evidence" value="ECO:0007669"/>
    <property type="project" value="UniProtKB-UniRule"/>
</dbReference>
<dbReference type="GO" id="GO:0004765">
    <property type="term" value="F:shikimate kinase activity"/>
    <property type="evidence" value="ECO:0007669"/>
    <property type="project" value="UniProtKB-UniRule"/>
</dbReference>
<dbReference type="GO" id="GO:0008652">
    <property type="term" value="P:amino acid biosynthetic process"/>
    <property type="evidence" value="ECO:0007669"/>
    <property type="project" value="UniProtKB-KW"/>
</dbReference>
<dbReference type="GO" id="GO:0009073">
    <property type="term" value="P:aromatic amino acid family biosynthetic process"/>
    <property type="evidence" value="ECO:0007669"/>
    <property type="project" value="UniProtKB-KW"/>
</dbReference>
<dbReference type="GO" id="GO:0009423">
    <property type="term" value="P:chorismate biosynthetic process"/>
    <property type="evidence" value="ECO:0007669"/>
    <property type="project" value="UniProtKB-UniRule"/>
</dbReference>
<dbReference type="CDD" id="cd00464">
    <property type="entry name" value="SK"/>
    <property type="match status" value="1"/>
</dbReference>
<dbReference type="Gene3D" id="3.40.50.300">
    <property type="entry name" value="P-loop containing nucleotide triphosphate hydrolases"/>
    <property type="match status" value="1"/>
</dbReference>
<dbReference type="HAMAP" id="MF_00109">
    <property type="entry name" value="Shikimate_kinase"/>
    <property type="match status" value="1"/>
</dbReference>
<dbReference type="InterPro" id="IPR027417">
    <property type="entry name" value="P-loop_NTPase"/>
</dbReference>
<dbReference type="InterPro" id="IPR031322">
    <property type="entry name" value="Shikimate/glucono_kinase"/>
</dbReference>
<dbReference type="InterPro" id="IPR000623">
    <property type="entry name" value="Shikimate_kinase/TSH1"/>
</dbReference>
<dbReference type="InterPro" id="IPR023000">
    <property type="entry name" value="Shikimate_kinase_CS"/>
</dbReference>
<dbReference type="PANTHER" id="PTHR21087">
    <property type="entry name" value="SHIKIMATE KINASE"/>
    <property type="match status" value="1"/>
</dbReference>
<dbReference type="PANTHER" id="PTHR21087:SF16">
    <property type="entry name" value="SHIKIMATE KINASE 1, CHLOROPLASTIC"/>
    <property type="match status" value="1"/>
</dbReference>
<dbReference type="Pfam" id="PF01202">
    <property type="entry name" value="SKI"/>
    <property type="match status" value="1"/>
</dbReference>
<dbReference type="PRINTS" id="PR01100">
    <property type="entry name" value="SHIKIMTKNASE"/>
</dbReference>
<dbReference type="SUPFAM" id="SSF52540">
    <property type="entry name" value="P-loop containing nucleoside triphosphate hydrolases"/>
    <property type="match status" value="1"/>
</dbReference>
<dbReference type="PROSITE" id="PS01128">
    <property type="entry name" value="SHIKIMATE_KINASE"/>
    <property type="match status" value="1"/>
</dbReference>
<feature type="chain" id="PRO_1000094416" description="Shikimate kinase">
    <location>
        <begin position="1"/>
        <end position="161"/>
    </location>
</feature>
<feature type="binding site" evidence="1">
    <location>
        <begin position="10"/>
        <end position="15"/>
    </location>
    <ligand>
        <name>ATP</name>
        <dbReference type="ChEBI" id="CHEBI:30616"/>
    </ligand>
</feature>
<feature type="binding site" evidence="1">
    <location>
        <position position="14"/>
    </location>
    <ligand>
        <name>Mg(2+)</name>
        <dbReference type="ChEBI" id="CHEBI:18420"/>
    </ligand>
</feature>
<feature type="binding site" evidence="1">
    <location>
        <position position="28"/>
    </location>
    <ligand>
        <name>substrate</name>
    </ligand>
</feature>
<feature type="binding site" evidence="1">
    <location>
        <position position="52"/>
    </location>
    <ligand>
        <name>substrate</name>
    </ligand>
</feature>
<feature type="binding site" evidence="1">
    <location>
        <position position="74"/>
    </location>
    <ligand>
        <name>substrate</name>
    </ligand>
</feature>
<feature type="binding site" evidence="1">
    <location>
        <position position="114"/>
    </location>
    <ligand>
        <name>ATP</name>
        <dbReference type="ChEBI" id="CHEBI:30616"/>
    </ligand>
</feature>
<feature type="binding site" evidence="1">
    <location>
        <position position="132"/>
    </location>
    <ligand>
        <name>substrate</name>
    </ligand>
</feature>